<keyword id="KW-0150">Chloroplast</keyword>
<keyword id="KW-0934">Plastid</keyword>
<keyword id="KW-0687">Ribonucleoprotein</keyword>
<keyword id="KW-0689">Ribosomal protein</keyword>
<keyword id="KW-0694">RNA-binding</keyword>
<keyword id="KW-0699">rRNA-binding</keyword>
<organism>
    <name type="scientific">Lotus japonicus</name>
    <name type="common">Lotus corniculatus var. japonicus</name>
    <dbReference type="NCBI Taxonomy" id="34305"/>
    <lineage>
        <taxon>Eukaryota</taxon>
        <taxon>Viridiplantae</taxon>
        <taxon>Streptophyta</taxon>
        <taxon>Embryophyta</taxon>
        <taxon>Tracheophyta</taxon>
        <taxon>Spermatophyta</taxon>
        <taxon>Magnoliopsida</taxon>
        <taxon>eudicotyledons</taxon>
        <taxon>Gunneridae</taxon>
        <taxon>Pentapetalae</taxon>
        <taxon>rosids</taxon>
        <taxon>fabids</taxon>
        <taxon>Fabales</taxon>
        <taxon>Fabaceae</taxon>
        <taxon>Papilionoideae</taxon>
        <taxon>50 kb inversion clade</taxon>
        <taxon>NPAAA clade</taxon>
        <taxon>Hologalegina</taxon>
        <taxon>robinioid clade</taxon>
        <taxon>Loteae</taxon>
        <taxon>Lotus</taxon>
    </lineage>
</organism>
<dbReference type="EMBL" id="AP002983">
    <property type="protein sequence ID" value="BAB33234.1"/>
    <property type="molecule type" value="Genomic_DNA"/>
</dbReference>
<dbReference type="RefSeq" id="NP_084835.1">
    <property type="nucleotide sequence ID" value="NC_002694.1"/>
</dbReference>
<dbReference type="SMR" id="Q9BBP8"/>
<dbReference type="GeneID" id="802930"/>
<dbReference type="GO" id="GO:0009507">
    <property type="term" value="C:chloroplast"/>
    <property type="evidence" value="ECO:0007669"/>
    <property type="project" value="UniProtKB-SubCell"/>
</dbReference>
<dbReference type="GO" id="GO:0022627">
    <property type="term" value="C:cytosolic small ribosomal subunit"/>
    <property type="evidence" value="ECO:0007669"/>
    <property type="project" value="TreeGrafter"/>
</dbReference>
<dbReference type="GO" id="GO:0019843">
    <property type="term" value="F:rRNA binding"/>
    <property type="evidence" value="ECO:0007669"/>
    <property type="project" value="UniProtKB-UniRule"/>
</dbReference>
<dbReference type="GO" id="GO:0003735">
    <property type="term" value="F:structural constituent of ribosome"/>
    <property type="evidence" value="ECO:0007669"/>
    <property type="project" value="InterPro"/>
</dbReference>
<dbReference type="GO" id="GO:0006412">
    <property type="term" value="P:translation"/>
    <property type="evidence" value="ECO:0007669"/>
    <property type="project" value="UniProtKB-UniRule"/>
</dbReference>
<dbReference type="CDD" id="cd02412">
    <property type="entry name" value="KH-II_30S_S3"/>
    <property type="match status" value="1"/>
</dbReference>
<dbReference type="FunFam" id="3.30.1140.32:FF:000003">
    <property type="entry name" value="30S ribosomal protein S3, chloroplastic"/>
    <property type="match status" value="1"/>
</dbReference>
<dbReference type="FunFam" id="3.30.300.20:FF:000008">
    <property type="entry name" value="30S ribosomal protein S3, chloroplastic"/>
    <property type="match status" value="1"/>
</dbReference>
<dbReference type="Gene3D" id="3.30.300.20">
    <property type="match status" value="1"/>
</dbReference>
<dbReference type="Gene3D" id="3.30.1140.32">
    <property type="entry name" value="Ribosomal protein S3, C-terminal domain"/>
    <property type="match status" value="1"/>
</dbReference>
<dbReference type="HAMAP" id="MF_01309_B">
    <property type="entry name" value="Ribosomal_uS3_B"/>
    <property type="match status" value="1"/>
</dbReference>
<dbReference type="InterPro" id="IPR015946">
    <property type="entry name" value="KH_dom-like_a/b"/>
</dbReference>
<dbReference type="InterPro" id="IPR004044">
    <property type="entry name" value="KH_dom_type_2"/>
</dbReference>
<dbReference type="InterPro" id="IPR009019">
    <property type="entry name" value="KH_sf_prok-type"/>
</dbReference>
<dbReference type="InterPro" id="IPR036419">
    <property type="entry name" value="Ribosomal_S3_C_sf"/>
</dbReference>
<dbReference type="InterPro" id="IPR005704">
    <property type="entry name" value="Ribosomal_uS3_bac-typ"/>
</dbReference>
<dbReference type="InterPro" id="IPR001351">
    <property type="entry name" value="Ribosomal_uS3_C"/>
</dbReference>
<dbReference type="InterPro" id="IPR018280">
    <property type="entry name" value="Ribosomal_uS3_CS"/>
</dbReference>
<dbReference type="NCBIfam" id="TIGR01009">
    <property type="entry name" value="rpsC_bact"/>
    <property type="match status" value="1"/>
</dbReference>
<dbReference type="PANTHER" id="PTHR11760">
    <property type="entry name" value="30S/40S RIBOSOMAL PROTEIN S3"/>
    <property type="match status" value="1"/>
</dbReference>
<dbReference type="PANTHER" id="PTHR11760:SF19">
    <property type="entry name" value="SMALL RIBOSOMAL SUBUNIT PROTEIN US3C"/>
    <property type="match status" value="1"/>
</dbReference>
<dbReference type="Pfam" id="PF00189">
    <property type="entry name" value="Ribosomal_S3_C"/>
    <property type="match status" value="1"/>
</dbReference>
<dbReference type="SUPFAM" id="SSF54814">
    <property type="entry name" value="Prokaryotic type KH domain (KH-domain type II)"/>
    <property type="match status" value="1"/>
</dbReference>
<dbReference type="SUPFAM" id="SSF54821">
    <property type="entry name" value="Ribosomal protein S3 C-terminal domain"/>
    <property type="match status" value="1"/>
</dbReference>
<dbReference type="PROSITE" id="PS50823">
    <property type="entry name" value="KH_TYPE_2"/>
    <property type="match status" value="1"/>
</dbReference>
<dbReference type="PROSITE" id="PS00548">
    <property type="entry name" value="RIBOSOMAL_S3"/>
    <property type="match status" value="1"/>
</dbReference>
<geneLocation type="chloroplast"/>
<reference key="1">
    <citation type="journal article" date="2000" name="DNA Res.">
        <title>Complete structure of the chloroplast genome of a legume, Lotus japonicus.</title>
        <authorList>
            <person name="Kato T."/>
            <person name="Kaneko T."/>
            <person name="Sato S."/>
            <person name="Nakamura Y."/>
            <person name="Tabata S."/>
        </authorList>
    </citation>
    <scope>NUCLEOTIDE SEQUENCE [LARGE SCALE GENOMIC DNA]</scope>
    <source>
        <strain>cv. Miyakojima MG-20</strain>
    </source>
</reference>
<protein>
    <recommendedName>
        <fullName evidence="2">Small ribosomal subunit protein uS3c</fullName>
    </recommendedName>
    <alternativeName>
        <fullName>30S ribosomal protein S3, chloroplastic</fullName>
    </alternativeName>
</protein>
<comment type="subunit">
    <text evidence="1">Part of the 30S ribosomal subunit.</text>
</comment>
<comment type="subcellular location">
    <subcellularLocation>
        <location>Plastid</location>
        <location>Chloroplast</location>
    </subcellularLocation>
</comment>
<comment type="similarity">
    <text evidence="2">Belongs to the universal ribosomal protein uS3 family.</text>
</comment>
<feature type="chain" id="PRO_0000130286" description="Small ribosomal subunit protein uS3c">
    <location>
        <begin position="1"/>
        <end position="218"/>
    </location>
</feature>
<feature type="domain" description="KH type-2">
    <location>
        <begin position="47"/>
        <end position="118"/>
    </location>
</feature>
<accession>Q9BBP8</accession>
<gene>
    <name type="primary">rps3</name>
</gene>
<proteinExistence type="inferred from homology"/>
<name>RR3_LOTJA</name>
<evidence type="ECO:0000250" key="1"/>
<evidence type="ECO:0000305" key="2"/>
<sequence length="218" mass="25093">MGQKINPLGFRLGTTQSHDSIWFAQPTNYSENLKEDKKIRDCIKTYIQKTIKISSGVEGIGRIKIQKRIDLIQVIIYMGFPKLLIDGKPRRIEELQINVQKKMNYVNRKLNIAITRIANAYRDPNILAEFIAGQLKNRVSFRKAMKKAIELTEQAGTKGVQVQIAGRIDGKEIARVEWIREGRVPLQTIRAKIDYCSYTVRTIYGVLGIKVWIFLNKE</sequence>